<protein>
    <recommendedName>
        <fullName evidence="1">4-diphosphocytidyl-2-C-methyl-D-erythritol kinase</fullName>
        <shortName evidence="1">CMK</shortName>
        <ecNumber evidence="1">2.7.1.148</ecNumber>
    </recommendedName>
    <alternativeName>
        <fullName evidence="1">4-(cytidine-5'-diphospho)-2-C-methyl-D-erythritol kinase</fullName>
    </alternativeName>
</protein>
<keyword id="KW-0067">ATP-binding</keyword>
<keyword id="KW-0414">Isoprene biosynthesis</keyword>
<keyword id="KW-0418">Kinase</keyword>
<keyword id="KW-0547">Nucleotide-binding</keyword>
<keyword id="KW-1185">Reference proteome</keyword>
<keyword id="KW-0808">Transferase</keyword>
<sequence>MRSYSLIAPAKINLYLEIIGDRPDGYHELAMILQSIGLSDQIDVRSISTDSIRVHCNHPQVPTDKSNLAYRAAELMVRQFPEAFAKYGGVEITVNKQIPVAAGLAGGSTNAAAVLVGIDLLWKLGLTQSELEELGGTLGSDVPFCVAGGTAIATGRGEQLSPLPSLDNIYIVLGKYRSLEVSTPWAYKTYRQQFGHSYIIDTDNLAARASAVHSGAIVKAILHKDTREIAQKLHNDLERVVLPAYPQVLHLREVFANQEGVLGTMMSGSGPTVFALFESQQQAELVLQQVREAIIDEDLELFVTRTITHGIKVTSSV</sequence>
<proteinExistence type="inferred from homology"/>
<name>ISPE_NOSP7</name>
<dbReference type="EC" id="2.7.1.148" evidence="1"/>
<dbReference type="EMBL" id="CP001037">
    <property type="protein sequence ID" value="ACC83257.1"/>
    <property type="molecule type" value="Genomic_DNA"/>
</dbReference>
<dbReference type="RefSeq" id="WP_012411213.1">
    <property type="nucleotide sequence ID" value="NC_010628.1"/>
</dbReference>
<dbReference type="SMR" id="B2J0A5"/>
<dbReference type="STRING" id="63737.Npun_R4911"/>
<dbReference type="EnsemblBacteria" id="ACC83257">
    <property type="protein sequence ID" value="ACC83257"/>
    <property type="gene ID" value="Npun_R4911"/>
</dbReference>
<dbReference type="KEGG" id="npu:Npun_R4911"/>
<dbReference type="eggNOG" id="COG1947">
    <property type="taxonomic scope" value="Bacteria"/>
</dbReference>
<dbReference type="HOGENOM" id="CLU_053057_1_1_3"/>
<dbReference type="OrthoDB" id="9809438at2"/>
<dbReference type="PhylomeDB" id="B2J0A5"/>
<dbReference type="UniPathway" id="UPA00056">
    <property type="reaction ID" value="UER00094"/>
</dbReference>
<dbReference type="Proteomes" id="UP000001191">
    <property type="component" value="Chromosome"/>
</dbReference>
<dbReference type="GO" id="GO:0050515">
    <property type="term" value="F:4-(cytidine 5'-diphospho)-2-C-methyl-D-erythritol kinase activity"/>
    <property type="evidence" value="ECO:0007669"/>
    <property type="project" value="UniProtKB-UniRule"/>
</dbReference>
<dbReference type="GO" id="GO:0005524">
    <property type="term" value="F:ATP binding"/>
    <property type="evidence" value="ECO:0007669"/>
    <property type="project" value="UniProtKB-UniRule"/>
</dbReference>
<dbReference type="GO" id="GO:0019288">
    <property type="term" value="P:isopentenyl diphosphate biosynthetic process, methylerythritol 4-phosphate pathway"/>
    <property type="evidence" value="ECO:0007669"/>
    <property type="project" value="UniProtKB-UniRule"/>
</dbReference>
<dbReference type="GO" id="GO:0016114">
    <property type="term" value="P:terpenoid biosynthetic process"/>
    <property type="evidence" value="ECO:0007669"/>
    <property type="project" value="InterPro"/>
</dbReference>
<dbReference type="Gene3D" id="3.30.230.10">
    <property type="match status" value="1"/>
</dbReference>
<dbReference type="Gene3D" id="3.30.70.890">
    <property type="entry name" value="GHMP kinase, C-terminal domain"/>
    <property type="match status" value="1"/>
</dbReference>
<dbReference type="HAMAP" id="MF_00061">
    <property type="entry name" value="IspE"/>
    <property type="match status" value="1"/>
</dbReference>
<dbReference type="InterPro" id="IPR013750">
    <property type="entry name" value="GHMP_kinase_C_dom"/>
</dbReference>
<dbReference type="InterPro" id="IPR036554">
    <property type="entry name" value="GHMP_kinase_C_sf"/>
</dbReference>
<dbReference type="InterPro" id="IPR006204">
    <property type="entry name" value="GHMP_kinase_N_dom"/>
</dbReference>
<dbReference type="InterPro" id="IPR004424">
    <property type="entry name" value="IspE"/>
</dbReference>
<dbReference type="InterPro" id="IPR020568">
    <property type="entry name" value="Ribosomal_Su5_D2-typ_SF"/>
</dbReference>
<dbReference type="InterPro" id="IPR014721">
    <property type="entry name" value="Ribsml_uS5_D2-typ_fold_subgr"/>
</dbReference>
<dbReference type="NCBIfam" id="TIGR00154">
    <property type="entry name" value="ispE"/>
    <property type="match status" value="1"/>
</dbReference>
<dbReference type="PANTHER" id="PTHR43527">
    <property type="entry name" value="4-DIPHOSPHOCYTIDYL-2-C-METHYL-D-ERYTHRITOL KINASE, CHLOROPLASTIC"/>
    <property type="match status" value="1"/>
</dbReference>
<dbReference type="PANTHER" id="PTHR43527:SF2">
    <property type="entry name" value="4-DIPHOSPHOCYTIDYL-2-C-METHYL-D-ERYTHRITOL KINASE, CHLOROPLASTIC"/>
    <property type="match status" value="1"/>
</dbReference>
<dbReference type="Pfam" id="PF08544">
    <property type="entry name" value="GHMP_kinases_C"/>
    <property type="match status" value="1"/>
</dbReference>
<dbReference type="Pfam" id="PF00288">
    <property type="entry name" value="GHMP_kinases_N"/>
    <property type="match status" value="1"/>
</dbReference>
<dbReference type="PIRSF" id="PIRSF010376">
    <property type="entry name" value="IspE"/>
    <property type="match status" value="1"/>
</dbReference>
<dbReference type="SUPFAM" id="SSF55060">
    <property type="entry name" value="GHMP Kinase, C-terminal domain"/>
    <property type="match status" value="1"/>
</dbReference>
<dbReference type="SUPFAM" id="SSF54211">
    <property type="entry name" value="Ribosomal protein S5 domain 2-like"/>
    <property type="match status" value="1"/>
</dbReference>
<organism>
    <name type="scientific">Nostoc punctiforme (strain ATCC 29133 / PCC 73102)</name>
    <dbReference type="NCBI Taxonomy" id="63737"/>
    <lineage>
        <taxon>Bacteria</taxon>
        <taxon>Bacillati</taxon>
        <taxon>Cyanobacteriota</taxon>
        <taxon>Cyanophyceae</taxon>
        <taxon>Nostocales</taxon>
        <taxon>Nostocaceae</taxon>
        <taxon>Nostoc</taxon>
    </lineage>
</organism>
<accession>B2J0A5</accession>
<reference key="1">
    <citation type="journal article" date="2013" name="Plant Physiol.">
        <title>A Nostoc punctiforme Sugar Transporter Necessary to Establish a Cyanobacterium-Plant Symbiosis.</title>
        <authorList>
            <person name="Ekman M."/>
            <person name="Picossi S."/>
            <person name="Campbell E.L."/>
            <person name="Meeks J.C."/>
            <person name="Flores E."/>
        </authorList>
    </citation>
    <scope>NUCLEOTIDE SEQUENCE [LARGE SCALE GENOMIC DNA]</scope>
    <source>
        <strain>ATCC 29133 / PCC 73102</strain>
    </source>
</reference>
<evidence type="ECO:0000255" key="1">
    <source>
        <dbReference type="HAMAP-Rule" id="MF_00061"/>
    </source>
</evidence>
<feature type="chain" id="PRO_1000092101" description="4-diphosphocytidyl-2-C-methyl-D-erythritol kinase">
    <location>
        <begin position="1"/>
        <end position="317"/>
    </location>
</feature>
<feature type="active site" evidence="1">
    <location>
        <position position="11"/>
    </location>
</feature>
<feature type="active site" evidence="1">
    <location>
        <position position="141"/>
    </location>
</feature>
<feature type="binding site" evidence="1">
    <location>
        <begin position="99"/>
        <end position="109"/>
    </location>
    <ligand>
        <name>ATP</name>
        <dbReference type="ChEBI" id="CHEBI:30616"/>
    </ligand>
</feature>
<gene>
    <name evidence="1" type="primary">ispE</name>
    <name type="ordered locus">Npun_R4911</name>
</gene>
<comment type="function">
    <text evidence="1">Catalyzes the phosphorylation of the position 2 hydroxy group of 4-diphosphocytidyl-2C-methyl-D-erythritol.</text>
</comment>
<comment type="catalytic activity">
    <reaction evidence="1">
        <text>4-CDP-2-C-methyl-D-erythritol + ATP = 4-CDP-2-C-methyl-D-erythritol 2-phosphate + ADP + H(+)</text>
        <dbReference type="Rhea" id="RHEA:18437"/>
        <dbReference type="ChEBI" id="CHEBI:15378"/>
        <dbReference type="ChEBI" id="CHEBI:30616"/>
        <dbReference type="ChEBI" id="CHEBI:57823"/>
        <dbReference type="ChEBI" id="CHEBI:57919"/>
        <dbReference type="ChEBI" id="CHEBI:456216"/>
        <dbReference type="EC" id="2.7.1.148"/>
    </reaction>
</comment>
<comment type="pathway">
    <text evidence="1">Isoprenoid biosynthesis; isopentenyl diphosphate biosynthesis via DXP pathway; isopentenyl diphosphate from 1-deoxy-D-xylulose 5-phosphate: step 3/6.</text>
</comment>
<comment type="similarity">
    <text evidence="1">Belongs to the GHMP kinase family. IspE subfamily.</text>
</comment>